<sequence length="881" mass="99616">MRGSALLDLILFLLVSPLAHSFKGSEISKFYDKSISNQISQSDRESGYVLVSTVDGSISLVDMSSQKLDWTFHTNEPIYSSYQAPHYHYTTDEERSSVLGDDFYMDCDKDWRLYNSSVRKGKRVNEIVDASEFIGTLPYTSTDRIVLGKKDTSVFLLDWKTGKLVKRYRMDELYSNTVVENDKEKAIVLSKEAPLLFGSGFKKSEDFPELVYIERKDFKIQCISKFGDVLWSVSYAKMEAKLQNHESVQFISGLSSSVGKNQFPLSYTTSVPMVQLRNVKYETLFPRLGFLDEALYLPFQDRKPNQLAIGDGNQLTLPGNKEAEEVLSLPLPETVISQITDIIDGSTKQAGFASKFSGLIVLIFGFCVTMLSVCGLFFYRLRQSIRIKEPYVSEVPIATPKKKKSKKNGTTKAVHKKENGFISGGNKDPSHEENEKRLLTAFPGLNNSSAEGYRVGKLFVSNKEIAKGSNGTVVLEGSYEGRLVAVKRLVQSHHDVAQKEILNLMASDKHSNIVRWYGVDQDEHFIYISLELCACSLNDLIYASSALLESPMASSSIHSIQINPIFENGKGVELWKENGHPSPVLLKLMRDIVAGLVHLHDIGIVHRDLKPQNVLIVKNSSLCAKLSDMGISKRLPADTSALTRNSTGLGSGSSGWQAPEQLRNERQTRAVDLFSLGCVLFFCMTGGKHPYGDNYERDVNVLNDQKDLFLIESLPEAVHLLTGLLNPDPNLRPRAQDVMHHPLFWNSDMRLSFLRDASDRVELENREEGSQLLAALESTAAVTLNGRWDEKLDSIFLDNIGRYRRYKFDSIRDLLRVIRNKLNHYRELPKELQELLGSVPEGFERYFSSRFPKLLIQVYTVLFDYCNNEEFFFKYSKTTVF</sequence>
<reference key="1">
    <citation type="journal article" date="2001" name="Plant Physiol.">
        <title>Molecular characterization of two Arabidopsis Ire1 homologs, endoplasmic reticulum-located transmembrane protein kinases.</title>
        <authorList>
            <person name="Koizumi N."/>
            <person name="Martinez I.M."/>
            <person name="Kimata Y."/>
            <person name="Kohno K."/>
            <person name="Sano H."/>
            <person name="Chrispeels M.J."/>
        </authorList>
    </citation>
    <scope>NUCLEOTIDE SEQUENCE [MRNA]</scope>
    <scope>FUNCTION</scope>
    <scope>SUBCELLULAR LOCATION</scope>
    <scope>TISSUE SPECIFICITY</scope>
</reference>
<reference key="2">
    <citation type="journal article" date="2002" name="Biochim. Biophys. Acta">
        <title>Characterization of two homologs of Ire1p, a kinase/endoribonuclease in yeast, in Arabidopsis thaliana.</title>
        <authorList>
            <person name="Noh S.J."/>
            <person name="Kwon C.S."/>
            <person name="Chung W.I."/>
        </authorList>
    </citation>
    <scope>NUCLEOTIDE SEQUENCE [MRNA]</scope>
    <scope>TISSUE SPECIFICITY</scope>
    <source>
        <strain>cv. Columbia</strain>
    </source>
</reference>
<reference key="3">
    <citation type="journal article" date="1998" name="DNA Res.">
        <title>Structural analysis of Arabidopsis thaliana chromosome 5. VIII. Sequence features of the regions of 1,081,958 bp covered by seventeen physically assigned P1 and TAC clones.</title>
        <authorList>
            <person name="Asamizu E."/>
            <person name="Sato S."/>
            <person name="Kaneko T."/>
            <person name="Nakamura Y."/>
            <person name="Kotani H."/>
            <person name="Miyajima N."/>
            <person name="Tabata S."/>
        </authorList>
    </citation>
    <scope>NUCLEOTIDE SEQUENCE [LARGE SCALE GENOMIC DNA]</scope>
    <source>
        <strain>cv. Columbia</strain>
    </source>
</reference>
<reference key="4">
    <citation type="journal article" date="2017" name="Plant J.">
        <title>Araport11: a complete reannotation of the Arabidopsis thaliana reference genome.</title>
        <authorList>
            <person name="Cheng C.Y."/>
            <person name="Krishnakumar V."/>
            <person name="Chan A.P."/>
            <person name="Thibaud-Nissen F."/>
            <person name="Schobel S."/>
            <person name="Town C.D."/>
        </authorList>
    </citation>
    <scope>GENOME REANNOTATION</scope>
    <source>
        <strain>cv. Columbia</strain>
    </source>
</reference>
<reference key="5">
    <citation type="journal article" date="2003" name="Science">
        <title>Empirical analysis of transcriptional activity in the Arabidopsis genome.</title>
        <authorList>
            <person name="Yamada K."/>
            <person name="Lim J."/>
            <person name="Dale J.M."/>
            <person name="Chen H."/>
            <person name="Shinn P."/>
            <person name="Palm C.J."/>
            <person name="Southwick A.M."/>
            <person name="Wu H.C."/>
            <person name="Kim C.J."/>
            <person name="Nguyen M."/>
            <person name="Pham P.K."/>
            <person name="Cheuk R.F."/>
            <person name="Karlin-Newmann G."/>
            <person name="Liu S.X."/>
            <person name="Lam B."/>
            <person name="Sakano H."/>
            <person name="Wu T."/>
            <person name="Yu G."/>
            <person name="Miranda M."/>
            <person name="Quach H.L."/>
            <person name="Tripp M."/>
            <person name="Chang C.H."/>
            <person name="Lee J.M."/>
            <person name="Toriumi M.J."/>
            <person name="Chan M.M."/>
            <person name="Tang C.C."/>
            <person name="Onodera C.S."/>
            <person name="Deng J.M."/>
            <person name="Akiyama K."/>
            <person name="Ansari Y."/>
            <person name="Arakawa T."/>
            <person name="Banh J."/>
            <person name="Banno F."/>
            <person name="Bowser L."/>
            <person name="Brooks S.Y."/>
            <person name="Carninci P."/>
            <person name="Chao Q."/>
            <person name="Choy N."/>
            <person name="Enju A."/>
            <person name="Goldsmith A.D."/>
            <person name="Gurjal M."/>
            <person name="Hansen N.F."/>
            <person name="Hayashizaki Y."/>
            <person name="Johnson-Hopson C."/>
            <person name="Hsuan V.W."/>
            <person name="Iida K."/>
            <person name="Karnes M."/>
            <person name="Khan S."/>
            <person name="Koesema E."/>
            <person name="Ishida J."/>
            <person name="Jiang P.X."/>
            <person name="Jones T."/>
            <person name="Kawai J."/>
            <person name="Kamiya A."/>
            <person name="Meyers C."/>
            <person name="Nakajima M."/>
            <person name="Narusaka M."/>
            <person name="Seki M."/>
            <person name="Sakurai T."/>
            <person name="Satou M."/>
            <person name="Tamse R."/>
            <person name="Vaysberg M."/>
            <person name="Wallender E.K."/>
            <person name="Wong C."/>
            <person name="Yamamura Y."/>
            <person name="Yuan S."/>
            <person name="Shinozaki K."/>
            <person name="Davis R.W."/>
            <person name="Theologis A."/>
            <person name="Ecker J.R."/>
        </authorList>
    </citation>
    <scope>NUCLEOTIDE SEQUENCE [LARGE SCALE MRNA]</scope>
    <source>
        <strain>cv. Columbia</strain>
    </source>
</reference>
<reference key="6">
    <citation type="journal article" date="2003" name="Plant Physiol.">
        <title>Expansion of the receptor-like kinase/Pelle gene family and receptor-like proteins in Arabidopsis.</title>
        <authorList>
            <person name="Shiu S.H."/>
            <person name="Bleecker A.B."/>
        </authorList>
    </citation>
    <scope>GENE FAMILY</scope>
</reference>
<reference key="7">
    <citation type="journal article" date="2011" name="Proc. Natl. Acad. Sci. U.S.A.">
        <title>Heat induces the splicing by IRE1 of a mRNA encoding a transcription factor involved in the unfolded protein response in Arabidopsis.</title>
        <authorList>
            <person name="Deng Y."/>
            <person name="Humbert S."/>
            <person name="Liu J.X."/>
            <person name="Srivastava R."/>
            <person name="Rothstein S.J."/>
            <person name="Howell S.H."/>
        </authorList>
    </citation>
    <scope>FUNCTION</scope>
    <scope>DISRUPTION PHENOTYPE</scope>
</reference>
<reference key="8">
    <citation type="journal article" date="2011" name="Sci. Rep.">
        <title>Arabidopsis IRE1 catalyses unconventional splicing of bZIP60 mRNA to produce the active transcription factor.</title>
        <authorList>
            <person name="Nagashima Y."/>
            <person name="Mishiba K."/>
            <person name="Suzuki E."/>
            <person name="Shimada Y."/>
            <person name="Iwata Y."/>
            <person name="Koizumi N."/>
        </authorList>
    </citation>
    <scope>FUNCTION</scope>
    <scope>DISRUPTION PHENOTYPE</scope>
</reference>
<reference key="9">
    <citation type="journal article" date="2012" name="Plant Cell">
        <title>Degradation of the endoplasmic reticulum by autophagy during endoplasmic reticulum stress in Arabidopsis.</title>
        <authorList>
            <person name="Liu Y."/>
            <person name="Burgos J.S."/>
            <person name="Deng Y."/>
            <person name="Srivastava R."/>
            <person name="Howell S.H."/>
            <person name="Bassham D.C."/>
        </authorList>
    </citation>
    <scope>FUNCTION</scope>
</reference>
<reference key="10">
    <citation type="journal article" date="2012" name="Plant J.">
        <title>AtIRE1A/AtIRE1B and AGB1 independently control two essential unfolded protein response pathways in Arabidopsis.</title>
        <authorList>
            <person name="Chen Y."/>
            <person name="Brandizzi F."/>
        </authorList>
    </citation>
    <scope>FUNCTION</scope>
    <scope>DISRUPTION PHENOTYPE</scope>
</reference>
<reference key="11">
    <citation type="journal article" date="2012" name="PLoS ONE">
        <title>IRE1/bZIP60-mediated unfolded protein response plays distinct roles in plant immunity and abiotic stress responses.</title>
        <authorList>
            <person name="Moreno A.A."/>
            <person name="Mukhtar M.S."/>
            <person name="Blanco F."/>
            <person name="Boatwright J.L."/>
            <person name="Moreno I."/>
            <person name="Jordan M.R."/>
            <person name="Chen Y."/>
            <person name="Brandizzi F."/>
            <person name="Dong X."/>
            <person name="Orellana A."/>
            <person name="Pajerowska-Mukhtar K.M."/>
        </authorList>
    </citation>
    <scope>FUNCTION</scope>
    <scope>DISRUPTION PHENOTYPE</scope>
    <scope>INDUCTION</scope>
</reference>
<reference key="12">
    <citation type="journal article" date="2012" name="PLoS ONE">
        <title>Alteration of the bZIP60/IRE1 pathway affects plant response to ER stress in Arabidopsis thaliana.</title>
        <authorList>
            <person name="Humbert S."/>
            <person name="Zhong S."/>
            <person name="Deng Y."/>
            <person name="Howell S.H."/>
            <person name="Rothstein S.J."/>
        </authorList>
    </citation>
    <scope>FUNCTION</scope>
</reference>
<reference key="13">
    <citation type="journal article" date="2012" name="Trends Plant Sci.">
        <title>Plant transducers of the endoplasmic reticulum unfolded protein response.</title>
        <authorList>
            <person name="Iwata Y."/>
            <person name="Koizumi N."/>
        </authorList>
    </citation>
    <scope>REVIEW</scope>
</reference>
<accession>Q93VJ2</accession>
<accession>Q94IG5</accession>
<accession>Q9FIN6</accession>
<protein>
    <recommendedName>
        <fullName>Serine/threonine-protein kinase/endoribonuclease IRE1b</fullName>
    </recommendedName>
    <alternativeName>
        <fullName>Endoplasmic reticulum-to-nucleus signaling 1-1</fullName>
    </alternativeName>
    <alternativeName>
        <fullName>Inositol-requiring protein 1-1</fullName>
        <shortName>AtIRE1-1</shortName>
    </alternativeName>
    <alternativeName>
        <fullName>Serine/threonine-protein kinase/endoribonuclease IRE1-1</fullName>
    </alternativeName>
    <domain>
        <recommendedName>
            <fullName>Serine/threonine-protein kinase</fullName>
            <ecNumber>2.7.11.1</ecNumber>
        </recommendedName>
    </domain>
    <domain>
        <recommendedName>
            <fullName>Endoribonuclease</fullName>
            <ecNumber>3.1.26.-</ecNumber>
        </recommendedName>
    </domain>
</protein>
<organism>
    <name type="scientific">Arabidopsis thaliana</name>
    <name type="common">Mouse-ear cress</name>
    <dbReference type="NCBI Taxonomy" id="3702"/>
    <lineage>
        <taxon>Eukaryota</taxon>
        <taxon>Viridiplantae</taxon>
        <taxon>Streptophyta</taxon>
        <taxon>Embryophyta</taxon>
        <taxon>Tracheophyta</taxon>
        <taxon>Spermatophyta</taxon>
        <taxon>Magnoliopsida</taxon>
        <taxon>eudicotyledons</taxon>
        <taxon>Gunneridae</taxon>
        <taxon>Pentapetalae</taxon>
        <taxon>rosids</taxon>
        <taxon>malvids</taxon>
        <taxon>Brassicales</taxon>
        <taxon>Brassicaceae</taxon>
        <taxon>Camelineae</taxon>
        <taxon>Arabidopsis</taxon>
    </lineage>
</organism>
<comment type="function">
    <text evidence="7 9 10 11 12 13 14">Senses unfolded proteins in the lumen of the endoplasmic reticulum via its N-terminal domain which leads to enzyme auto-activation. The active endoribonuclease domain splices bZIP60 mRNA to generate a new C-terminus, converting it into a potent unfolded-protein response transcriptional activator which then induces transcription of UPR target genes. Involved in organ growth regulation. Plays a role in plant immunity and abiotic stress responses. Required for ER stress-induced autophagy.</text>
</comment>
<comment type="catalytic activity">
    <reaction>
        <text>L-seryl-[protein] + ATP = O-phospho-L-seryl-[protein] + ADP + H(+)</text>
        <dbReference type="Rhea" id="RHEA:17989"/>
        <dbReference type="Rhea" id="RHEA-COMP:9863"/>
        <dbReference type="Rhea" id="RHEA-COMP:11604"/>
        <dbReference type="ChEBI" id="CHEBI:15378"/>
        <dbReference type="ChEBI" id="CHEBI:29999"/>
        <dbReference type="ChEBI" id="CHEBI:30616"/>
        <dbReference type="ChEBI" id="CHEBI:83421"/>
        <dbReference type="ChEBI" id="CHEBI:456216"/>
        <dbReference type="EC" id="2.7.11.1"/>
    </reaction>
</comment>
<comment type="catalytic activity">
    <reaction>
        <text>L-threonyl-[protein] + ATP = O-phospho-L-threonyl-[protein] + ADP + H(+)</text>
        <dbReference type="Rhea" id="RHEA:46608"/>
        <dbReference type="Rhea" id="RHEA-COMP:11060"/>
        <dbReference type="Rhea" id="RHEA-COMP:11605"/>
        <dbReference type="ChEBI" id="CHEBI:15378"/>
        <dbReference type="ChEBI" id="CHEBI:30013"/>
        <dbReference type="ChEBI" id="CHEBI:30616"/>
        <dbReference type="ChEBI" id="CHEBI:61977"/>
        <dbReference type="ChEBI" id="CHEBI:456216"/>
        <dbReference type="EC" id="2.7.11.1"/>
    </reaction>
</comment>
<comment type="cofactor">
    <cofactor evidence="1">
        <name>Mg(2+)</name>
        <dbReference type="ChEBI" id="CHEBI:18420"/>
    </cofactor>
</comment>
<comment type="activity regulation">
    <text evidence="1">The kinase domain is activated by trans-autophosphorylation. Kinase activity is required for activation of the endoribonuclease domain (By similarity).</text>
</comment>
<comment type="subunit">
    <text evidence="1">Homodimer; disulfide-linked. Dimer formation is driven by hydrophobic interactions within the N-terminal luminal domains and stabilized by disulfide bridges (By similarity).</text>
</comment>
<comment type="subcellular location">
    <subcellularLocation>
        <location evidence="7">Endoplasmic reticulum membrane</location>
        <topology evidence="7">Single-pass type I membrane protein</topology>
    </subcellularLocation>
</comment>
<comment type="alternative products">
    <event type="alternative splicing"/>
    <isoform>
        <id>Q93VJ2-1</id>
        <name>1</name>
        <sequence type="displayed"/>
    </isoform>
    <text>A number of isoforms are produced. According to EST sequences.</text>
</comment>
<comment type="tissue specificity">
    <text evidence="7 8">Ubiquitous. Detected in the apical meristem, at leaf margins where vascular bundles end, in the anthers before pollen is formed and in the ovules at a very early stage of development. There is no expression in more mature embryos. Also strongly expressed in the cotyledons immediately after germination but not later on.</text>
</comment>
<comment type="induction">
    <text evidence="12">By ER stress inducer tunicamycin, by salicylic acid (SA) and by bacterial pathogen infection.</text>
</comment>
<comment type="PTM">
    <text evidence="1">Autophosphorylated.</text>
</comment>
<comment type="disruption phenotype">
    <text evidence="9 10 11 12">No visible phenotype. Ire1a and ire1b double mutant is more sensitive to the ER stress inducer tunicamycin than the wild-type and is enable to give rise to the spliced bZIP60 mRNA form (PubMed:22355548). Ire1a and ire1b double mutant displays short roots and a ER stress-sensitive phenotype (PubMed:21914012).</text>
</comment>
<comment type="similarity">
    <text evidence="3">Belongs to the protein kinase superfamily. Ser/Thr protein kinase family.</text>
</comment>
<comment type="sequence caution" evidence="15">
    <conflict type="erroneous gene model prediction">
        <sequence resource="EMBL-CDS" id="BAB11229"/>
    </conflict>
</comment>
<evidence type="ECO:0000250" key="1"/>
<evidence type="ECO:0000255" key="2"/>
<evidence type="ECO:0000255" key="3">
    <source>
        <dbReference type="PROSITE-ProRule" id="PRU00159"/>
    </source>
</evidence>
<evidence type="ECO:0000255" key="4">
    <source>
        <dbReference type="PROSITE-ProRule" id="PRU00725"/>
    </source>
</evidence>
<evidence type="ECO:0000255" key="5">
    <source>
        <dbReference type="PROSITE-ProRule" id="PRU10027"/>
    </source>
</evidence>
<evidence type="ECO:0000256" key="6">
    <source>
        <dbReference type="SAM" id="MobiDB-lite"/>
    </source>
</evidence>
<evidence type="ECO:0000269" key="7">
    <source>
    </source>
</evidence>
<evidence type="ECO:0000269" key="8">
    <source>
    </source>
</evidence>
<evidence type="ECO:0000269" key="9">
    <source>
    </source>
</evidence>
<evidence type="ECO:0000269" key="10">
    <source>
    </source>
</evidence>
<evidence type="ECO:0000269" key="11">
    <source>
    </source>
</evidence>
<evidence type="ECO:0000269" key="12">
    <source>
    </source>
</evidence>
<evidence type="ECO:0000269" key="13">
    <source>
    </source>
</evidence>
<evidence type="ECO:0000269" key="14">
    <source>
    </source>
</evidence>
<evidence type="ECO:0000305" key="15"/>
<gene>
    <name type="primary">IRE1B</name>
    <name type="synonym">IRE1-1</name>
    <name type="ordered locus">At5g24360</name>
    <name type="ORF">K16H17.7</name>
</gene>
<proteinExistence type="evidence at transcript level"/>
<keyword id="KW-0025">Alternative splicing</keyword>
<keyword id="KW-0067">ATP-binding</keyword>
<keyword id="KW-0072">Autophagy</keyword>
<keyword id="KW-1015">Disulfide bond</keyword>
<keyword id="KW-0256">Endoplasmic reticulum</keyword>
<keyword id="KW-0325">Glycoprotein</keyword>
<keyword id="KW-0378">Hydrolase</keyword>
<keyword id="KW-0391">Immunity</keyword>
<keyword id="KW-0418">Kinase</keyword>
<keyword id="KW-0460">Magnesium</keyword>
<keyword id="KW-0472">Membrane</keyword>
<keyword id="KW-0479">Metal-binding</keyword>
<keyword id="KW-0507">mRNA processing</keyword>
<keyword id="KW-0508">mRNA splicing</keyword>
<keyword id="KW-0511">Multifunctional enzyme</keyword>
<keyword id="KW-0547">Nucleotide-binding</keyword>
<keyword id="KW-1185">Reference proteome</keyword>
<keyword id="KW-0723">Serine/threonine-protein kinase</keyword>
<keyword id="KW-0732">Signal</keyword>
<keyword id="KW-0804">Transcription</keyword>
<keyword id="KW-0805">Transcription regulation</keyword>
<keyword id="KW-0808">Transferase</keyword>
<keyword id="KW-0812">Transmembrane</keyword>
<keyword id="KW-1133">Transmembrane helix</keyword>
<keyword id="KW-0834">Unfolded protein response</keyword>
<feature type="signal peptide" evidence="2">
    <location>
        <begin position="1"/>
        <end position="21"/>
    </location>
</feature>
<feature type="chain" id="PRO_0000422138" description="Serine/threonine-protein kinase/endoribonuclease IRE1b">
    <location>
        <begin position="22"/>
        <end position="881"/>
    </location>
</feature>
<feature type="topological domain" description="Lumenal" evidence="2">
    <location>
        <begin position="22"/>
        <end position="357"/>
    </location>
</feature>
<feature type="transmembrane region" description="Helical" evidence="2">
    <location>
        <begin position="358"/>
        <end position="378"/>
    </location>
</feature>
<feature type="topological domain" description="Cytoplasmic" evidence="2">
    <location>
        <begin position="379"/>
        <end position="881"/>
    </location>
</feature>
<feature type="domain" description="Protein kinase" evidence="3">
    <location>
        <begin position="459"/>
        <end position="744"/>
    </location>
</feature>
<feature type="domain" description="KEN" evidence="4">
    <location>
        <begin position="747"/>
        <end position="878"/>
    </location>
</feature>
<feature type="region of interest" description="ATP selon article">
    <location>
        <begin position="481"/>
        <end position="502"/>
    </location>
</feature>
<feature type="region of interest" description="Disordered" evidence="6">
    <location>
        <begin position="642"/>
        <end position="661"/>
    </location>
</feature>
<feature type="active site" description="Proton acceptor" evidence="3 5">
    <location>
        <position position="608"/>
    </location>
</feature>
<feature type="binding site" evidence="3">
    <location>
        <begin position="465"/>
        <end position="473"/>
    </location>
    <ligand>
        <name>ATP</name>
        <dbReference type="ChEBI" id="CHEBI:30616"/>
    </ligand>
</feature>
<feature type="binding site" evidence="3">
    <location>
        <position position="487"/>
    </location>
    <ligand>
        <name>ATP</name>
        <dbReference type="ChEBI" id="CHEBI:30616"/>
    </ligand>
</feature>
<feature type="glycosylation site" description="N-linked (GlcNAc...) asparagine" evidence="2">
    <location>
        <position position="115"/>
    </location>
</feature>
<feature type="sequence conflict" description="In Ref. 1; BAB63366." evidence="15" ref="1">
    <original>T</original>
    <variation>I</variation>
    <location>
        <position position="647"/>
    </location>
</feature>
<name>IRE1B_ARATH</name>
<dbReference type="EC" id="2.7.11.1"/>
<dbReference type="EC" id="3.1.26.-"/>
<dbReference type="EMBL" id="AB049936">
    <property type="protein sequence ID" value="BAB63366.1"/>
    <property type="molecule type" value="mRNA"/>
</dbReference>
<dbReference type="EMBL" id="AY057897">
    <property type="protein sequence ID" value="AAL17714.1"/>
    <property type="molecule type" value="mRNA"/>
</dbReference>
<dbReference type="EMBL" id="AB016884">
    <property type="protein sequence ID" value="BAB11229.1"/>
    <property type="status" value="ALT_SEQ"/>
    <property type="molecule type" value="Genomic_DNA"/>
</dbReference>
<dbReference type="EMBL" id="CP002688">
    <property type="protein sequence ID" value="AED93301.1"/>
    <property type="molecule type" value="Genomic_DNA"/>
</dbReference>
<dbReference type="EMBL" id="AY057480">
    <property type="protein sequence ID" value="AAL09714.1"/>
    <property type="molecule type" value="mRNA"/>
</dbReference>
<dbReference type="RefSeq" id="NP_568444.1">
    <molecule id="Q93VJ2-1"/>
    <property type="nucleotide sequence ID" value="NM_122344.5"/>
</dbReference>
<dbReference type="SMR" id="Q93VJ2"/>
<dbReference type="BioGRID" id="17782">
    <property type="interactions" value="2"/>
</dbReference>
<dbReference type="FunCoup" id="Q93VJ2">
    <property type="interactions" value="1467"/>
</dbReference>
<dbReference type="STRING" id="3702.Q93VJ2"/>
<dbReference type="GlyCosmos" id="Q93VJ2">
    <property type="glycosylation" value="1 site, No reported glycans"/>
</dbReference>
<dbReference type="GlyGen" id="Q93VJ2">
    <property type="glycosylation" value="1 site"/>
</dbReference>
<dbReference type="iPTMnet" id="Q93VJ2"/>
<dbReference type="PaxDb" id="3702-AT5G24360.2"/>
<dbReference type="ProteomicsDB" id="232226">
    <molecule id="Q93VJ2-1"/>
</dbReference>
<dbReference type="EnsemblPlants" id="AT5G24360.1">
    <molecule id="Q93VJ2-1"/>
    <property type="protein sequence ID" value="AT5G24360.1"/>
    <property type="gene ID" value="AT5G24360"/>
</dbReference>
<dbReference type="GeneID" id="832507"/>
<dbReference type="Gramene" id="AT5G24360.1">
    <molecule id="Q93VJ2-1"/>
    <property type="protein sequence ID" value="AT5G24360.1"/>
    <property type="gene ID" value="AT5G24360"/>
</dbReference>
<dbReference type="KEGG" id="ath:AT5G24360"/>
<dbReference type="Araport" id="AT5G24360"/>
<dbReference type="TAIR" id="AT5G24360">
    <property type="gene designation" value="IRE1-1"/>
</dbReference>
<dbReference type="eggNOG" id="KOG1027">
    <property type="taxonomic scope" value="Eukaryota"/>
</dbReference>
<dbReference type="InParanoid" id="Q93VJ2"/>
<dbReference type="OMA" id="MYRETED"/>
<dbReference type="PhylomeDB" id="Q93VJ2"/>
<dbReference type="PRO" id="PR:Q93VJ2"/>
<dbReference type="Proteomes" id="UP000006548">
    <property type="component" value="Chromosome 5"/>
</dbReference>
<dbReference type="ExpressionAtlas" id="Q93VJ2">
    <property type="expression patterns" value="baseline and differential"/>
</dbReference>
<dbReference type="GO" id="GO:0005783">
    <property type="term" value="C:endoplasmic reticulum"/>
    <property type="evidence" value="ECO:0000314"/>
    <property type="project" value="UniProtKB"/>
</dbReference>
<dbReference type="GO" id="GO:0005789">
    <property type="term" value="C:endoplasmic reticulum membrane"/>
    <property type="evidence" value="ECO:0007669"/>
    <property type="project" value="UniProtKB-SubCell"/>
</dbReference>
<dbReference type="GO" id="GO:0005524">
    <property type="term" value="F:ATP binding"/>
    <property type="evidence" value="ECO:0007669"/>
    <property type="project" value="UniProtKB-KW"/>
</dbReference>
<dbReference type="GO" id="GO:0046872">
    <property type="term" value="F:metal ion binding"/>
    <property type="evidence" value="ECO:0007669"/>
    <property type="project" value="UniProtKB-KW"/>
</dbReference>
<dbReference type="GO" id="GO:0106310">
    <property type="term" value="F:protein serine kinase activity"/>
    <property type="evidence" value="ECO:0007669"/>
    <property type="project" value="RHEA"/>
</dbReference>
<dbReference type="GO" id="GO:0004674">
    <property type="term" value="F:protein serine/threonine kinase activity"/>
    <property type="evidence" value="ECO:0007669"/>
    <property type="project" value="UniProtKB-KW"/>
</dbReference>
<dbReference type="GO" id="GO:0004521">
    <property type="term" value="F:RNA endonuclease activity"/>
    <property type="evidence" value="ECO:0007669"/>
    <property type="project" value="InterPro"/>
</dbReference>
<dbReference type="GO" id="GO:0006914">
    <property type="term" value="P:autophagy"/>
    <property type="evidence" value="ECO:0007669"/>
    <property type="project" value="UniProtKB-KW"/>
</dbReference>
<dbReference type="GO" id="GO:0042742">
    <property type="term" value="P:defense response to bacterium"/>
    <property type="evidence" value="ECO:0000315"/>
    <property type="project" value="UniProtKB"/>
</dbReference>
<dbReference type="GO" id="GO:0030968">
    <property type="term" value="P:endoplasmic reticulum unfolded protein response"/>
    <property type="evidence" value="ECO:0007669"/>
    <property type="project" value="InterPro"/>
</dbReference>
<dbReference type="GO" id="GO:0002376">
    <property type="term" value="P:immune system process"/>
    <property type="evidence" value="ECO:0007669"/>
    <property type="project" value="UniProtKB-KW"/>
</dbReference>
<dbReference type="GO" id="GO:0006397">
    <property type="term" value="P:mRNA processing"/>
    <property type="evidence" value="ECO:0007669"/>
    <property type="project" value="UniProtKB-KW"/>
</dbReference>
<dbReference type="GO" id="GO:0034263">
    <property type="term" value="P:positive regulation of autophagy in response to ER overload"/>
    <property type="evidence" value="ECO:0000315"/>
    <property type="project" value="UniProtKB"/>
</dbReference>
<dbReference type="GO" id="GO:0009751">
    <property type="term" value="P:response to salicylic acid"/>
    <property type="evidence" value="ECO:0000315"/>
    <property type="project" value="UniProtKB"/>
</dbReference>
<dbReference type="GO" id="GO:0008380">
    <property type="term" value="P:RNA splicing"/>
    <property type="evidence" value="ECO:0000315"/>
    <property type="project" value="UniProtKB"/>
</dbReference>
<dbReference type="CDD" id="cd09213">
    <property type="entry name" value="Luminal_IRE1_like"/>
    <property type="match status" value="1"/>
</dbReference>
<dbReference type="CDD" id="cd10422">
    <property type="entry name" value="RNase_Ire1"/>
    <property type="match status" value="1"/>
</dbReference>
<dbReference type="FunFam" id="2.130.10.10:FF:002450">
    <property type="entry name" value="Inositol requiring 1-1"/>
    <property type="match status" value="1"/>
</dbReference>
<dbReference type="FunFam" id="3.30.200.20:FF:000077">
    <property type="entry name" value="Putative Serine/threonine-protein kinase/endoribonuclease IRE1"/>
    <property type="match status" value="1"/>
</dbReference>
<dbReference type="FunFam" id="1.20.1440.180:FF:000002">
    <property type="entry name" value="Serine/threonine-protein kinase/endoribonuclease IRE1"/>
    <property type="match status" value="1"/>
</dbReference>
<dbReference type="FunFam" id="1.10.510.10:FF:000463">
    <property type="entry name" value="Serine/threonine-protein kinase/endoribonuclease IRE1a"/>
    <property type="match status" value="1"/>
</dbReference>
<dbReference type="Gene3D" id="1.20.1440.180">
    <property type="entry name" value="KEN domain"/>
    <property type="match status" value="1"/>
</dbReference>
<dbReference type="Gene3D" id="3.30.200.20">
    <property type="entry name" value="Phosphorylase Kinase, domain 1"/>
    <property type="match status" value="1"/>
</dbReference>
<dbReference type="Gene3D" id="1.10.510.10">
    <property type="entry name" value="Transferase(Phosphotransferase) domain 1"/>
    <property type="match status" value="1"/>
</dbReference>
<dbReference type="Gene3D" id="2.130.10.10">
    <property type="entry name" value="YVTN repeat-like/Quinoprotein amine dehydrogenase"/>
    <property type="match status" value="1"/>
</dbReference>
<dbReference type="InterPro" id="IPR045133">
    <property type="entry name" value="IRE1/2-like"/>
</dbReference>
<dbReference type="InterPro" id="IPR010513">
    <property type="entry name" value="KEN_dom"/>
</dbReference>
<dbReference type="InterPro" id="IPR038357">
    <property type="entry name" value="KEN_sf"/>
</dbReference>
<dbReference type="InterPro" id="IPR011009">
    <property type="entry name" value="Kinase-like_dom_sf"/>
</dbReference>
<dbReference type="InterPro" id="IPR000719">
    <property type="entry name" value="Prot_kinase_dom"/>
</dbReference>
<dbReference type="InterPro" id="IPR011047">
    <property type="entry name" value="Quinoprotein_ADH-like_sf"/>
</dbReference>
<dbReference type="InterPro" id="IPR008271">
    <property type="entry name" value="Ser/Thr_kinase_AS"/>
</dbReference>
<dbReference type="InterPro" id="IPR015943">
    <property type="entry name" value="WD40/YVTN_repeat-like_dom_sf"/>
</dbReference>
<dbReference type="PANTHER" id="PTHR13954">
    <property type="entry name" value="IRE1-RELATED"/>
    <property type="match status" value="1"/>
</dbReference>
<dbReference type="PANTHER" id="PTHR13954:SF27">
    <property type="entry name" value="SERINE_THREONINE-PROTEIN KINASE_ENDORIBONUCLEASE IRE1B"/>
    <property type="match status" value="1"/>
</dbReference>
<dbReference type="Pfam" id="PF00069">
    <property type="entry name" value="Pkinase"/>
    <property type="match status" value="1"/>
</dbReference>
<dbReference type="Pfam" id="PF06479">
    <property type="entry name" value="Ribonuc_2-5A"/>
    <property type="match status" value="1"/>
</dbReference>
<dbReference type="SMART" id="SM00580">
    <property type="entry name" value="PUG"/>
    <property type="match status" value="1"/>
</dbReference>
<dbReference type="SMART" id="SM00220">
    <property type="entry name" value="S_TKc"/>
    <property type="match status" value="1"/>
</dbReference>
<dbReference type="SUPFAM" id="SSF56112">
    <property type="entry name" value="Protein kinase-like (PK-like)"/>
    <property type="match status" value="1"/>
</dbReference>
<dbReference type="SUPFAM" id="SSF50998">
    <property type="entry name" value="Quinoprotein alcohol dehydrogenase-like"/>
    <property type="match status" value="1"/>
</dbReference>
<dbReference type="PROSITE" id="PS51392">
    <property type="entry name" value="KEN"/>
    <property type="match status" value="1"/>
</dbReference>
<dbReference type="PROSITE" id="PS50011">
    <property type="entry name" value="PROTEIN_KINASE_DOM"/>
    <property type="match status" value="1"/>
</dbReference>
<dbReference type="PROSITE" id="PS00108">
    <property type="entry name" value="PROTEIN_KINASE_ST"/>
    <property type="match status" value="1"/>
</dbReference>